<reference key="1">
    <citation type="journal article" date="2001" name="Mol. Gen. Genet.">
        <title>Comparison of psbK operon organization and group III intron content in chloroplast genomes of 12 Euglenoid species.</title>
        <authorList>
            <person name="Doetsch N.A."/>
            <person name="Thompson M.D."/>
            <person name="Favreau M.R."/>
            <person name="Hallick R.B."/>
        </authorList>
    </citation>
    <scope>NUCLEOTIDE SEQUENCE [GENOMIC DNA]</scope>
</reference>
<reference key="2">
    <citation type="journal article" date="2004" name="Nucleic Acids Res.">
        <title>Recent horizontal intron transfer to a chloroplast genome.</title>
        <authorList>
            <person name="Sheveleva E.V."/>
            <person name="Hallick R.B."/>
        </authorList>
    </citation>
    <scope>NUCLEOTIDE SEQUENCE [GENOMIC DNA]</scope>
</reference>
<proteinExistence type="inferred from homology"/>
<accession>Q9MS62</accession>
<sequence length="31" mass="3495">MEISTTQISIILLIALIPAFFSLKLGKELYK</sequence>
<gene>
    <name evidence="1" type="primary">psaM</name>
</gene>
<feature type="chain" id="PRO_0000277404" description="Photosystem I reaction center subunit XII">
    <location>
        <begin position="1"/>
        <end position="31"/>
    </location>
</feature>
<feature type="transmembrane region" description="Helical" evidence="1">
    <location>
        <begin position="7"/>
        <end position="26"/>
    </location>
</feature>
<name>PSAM_EUGMY</name>
<organism>
    <name type="scientific">Euglena myxocylindracea</name>
    <dbReference type="NCBI Taxonomy" id="38276"/>
    <lineage>
        <taxon>Eukaryota</taxon>
        <taxon>Discoba</taxon>
        <taxon>Euglenozoa</taxon>
        <taxon>Euglenida</taxon>
        <taxon>Spirocuta</taxon>
        <taxon>Euglenophyceae</taxon>
        <taxon>Euglenales</taxon>
        <taxon>Euglenaceae</taxon>
        <taxon>Euglena</taxon>
    </lineage>
</organism>
<comment type="subcellular location">
    <subcellularLocation>
        <location evidence="1">Plastid</location>
        <location evidence="1">Chloroplast thylakoid membrane</location>
        <topology evidence="1">Single-pass membrane protein</topology>
    </subcellularLocation>
</comment>
<comment type="similarity">
    <text evidence="1">Belongs to the PsaM family.</text>
</comment>
<keyword id="KW-0150">Chloroplast</keyword>
<keyword id="KW-0472">Membrane</keyword>
<keyword id="KW-0602">Photosynthesis</keyword>
<keyword id="KW-0603">Photosystem I</keyword>
<keyword id="KW-0934">Plastid</keyword>
<keyword id="KW-0793">Thylakoid</keyword>
<keyword id="KW-0812">Transmembrane</keyword>
<keyword id="KW-1133">Transmembrane helix</keyword>
<geneLocation type="chloroplast"/>
<protein>
    <recommendedName>
        <fullName evidence="1">Photosystem I reaction center subunit XII</fullName>
    </recommendedName>
    <alternativeName>
        <fullName evidence="1">PSI-M</fullName>
    </alternativeName>
</protein>
<dbReference type="EMBL" id="AF241281">
    <property type="protein sequence ID" value="AAF82453.1"/>
    <property type="molecule type" value="Genomic_DNA"/>
</dbReference>
<dbReference type="EMBL" id="AY290861">
    <property type="protein sequence ID" value="AAQ84050.1"/>
    <property type="molecule type" value="Genomic_DNA"/>
</dbReference>
<dbReference type="SMR" id="Q9MS62"/>
<dbReference type="GO" id="GO:0009535">
    <property type="term" value="C:chloroplast thylakoid membrane"/>
    <property type="evidence" value="ECO:0007669"/>
    <property type="project" value="UniProtKB-SubCell"/>
</dbReference>
<dbReference type="GO" id="GO:0009522">
    <property type="term" value="C:photosystem I"/>
    <property type="evidence" value="ECO:0007669"/>
    <property type="project" value="UniProtKB-KW"/>
</dbReference>
<dbReference type="GO" id="GO:0015979">
    <property type="term" value="P:photosynthesis"/>
    <property type="evidence" value="ECO:0007669"/>
    <property type="project" value="UniProtKB-UniRule"/>
</dbReference>
<dbReference type="HAMAP" id="MF_00828">
    <property type="entry name" value="PSI_PsaM"/>
    <property type="match status" value="1"/>
</dbReference>
<dbReference type="InterPro" id="IPR010010">
    <property type="entry name" value="PSI_PsaM"/>
</dbReference>
<dbReference type="InterPro" id="IPR037279">
    <property type="entry name" value="PSI_PsaM_sf"/>
</dbReference>
<dbReference type="NCBIfam" id="TIGR03053">
    <property type="entry name" value="PS_I_psaM"/>
    <property type="match status" value="1"/>
</dbReference>
<dbReference type="Pfam" id="PF07465">
    <property type="entry name" value="PsaM"/>
    <property type="match status" value="1"/>
</dbReference>
<dbReference type="SUPFAM" id="SSF81548">
    <property type="entry name" value="Subunit XII of photosystem I reaction centre, PsaM"/>
    <property type="match status" value="1"/>
</dbReference>
<evidence type="ECO:0000255" key="1">
    <source>
        <dbReference type="HAMAP-Rule" id="MF_00828"/>
    </source>
</evidence>